<feature type="chain" id="PRO_0000093571" description="Short neurotoxin 1" evidence="3">
    <location>
        <begin position="1"/>
        <end position="64"/>
    </location>
</feature>
<feature type="disulfide bond" evidence="1">
    <location>
        <begin position="3"/>
        <end position="26"/>
    </location>
</feature>
<feature type="disulfide bond" evidence="1">
    <location>
        <begin position="20"/>
        <end position="43"/>
    </location>
</feature>
<feature type="disulfide bond" evidence="1">
    <location>
        <begin position="45"/>
        <end position="56"/>
    </location>
</feature>
<feature type="disulfide bond" evidence="1">
    <location>
        <begin position="57"/>
        <end position="62"/>
    </location>
</feature>
<protein>
    <recommendedName>
        <fullName>Short neurotoxin 1</fullName>
    </recommendedName>
    <alternativeName>
        <fullName>Toxin V-II-1</fullName>
    </alternativeName>
</protein>
<keyword id="KW-0008">Acetylcholine receptor inhibiting toxin</keyword>
<keyword id="KW-0903">Direct protein sequencing</keyword>
<keyword id="KW-1015">Disulfide bond</keyword>
<keyword id="KW-0872">Ion channel impairing toxin</keyword>
<keyword id="KW-0528">Neurotoxin</keyword>
<keyword id="KW-0629">Postsynaptic neurotoxin</keyword>
<keyword id="KW-0964">Secreted</keyword>
<keyword id="KW-0800">Toxin</keyword>
<comment type="function">
    <text evidence="2">Binds to muscle nicotinic acetylcholine receptor (nAChR) and inhibit acetylcholine from binding to the receptor, thereby impairing neuromuscular transmission.</text>
</comment>
<comment type="subcellular location">
    <subcellularLocation>
        <location evidence="3">Secreted</location>
    </subcellularLocation>
</comment>
<comment type="tissue specificity">
    <text evidence="4">Expressed by the venom gland.</text>
</comment>
<comment type="similarity">
    <text evidence="4">Belongs to the three-finger toxin family. Short-chain subfamily. Type I alpha-neurotoxin sub-subfamily.</text>
</comment>
<sequence length="64" mass="7272">RICLNQQQSTPEDQPTNGQCYIKTDCQNKTWNTHRGSRTDRGCGCPKVKPGINLRCCKTDKCNE</sequence>
<reference key="1">
    <citation type="journal article" date="1989" name="J. Biochem.">
        <title>Amino acid sequence of a short chain neurotoxin from the venom of banded krait (Bungarus fasciatus).</title>
        <authorList>
            <person name="Liu C.-S."/>
            <person name="Chen J.-P."/>
            <person name="Chang C.-S."/>
            <person name="Lo T.-B."/>
        </authorList>
    </citation>
    <scope>PROTEIN SEQUENCE</scope>
    <scope>SUBCELLULAR LOCATION</scope>
    <source>
        <tissue>Venom</tissue>
    </source>
</reference>
<organism>
    <name type="scientific">Bungarus fasciatus</name>
    <name type="common">Banded krait</name>
    <name type="synonym">Pseudoboa fasciata</name>
    <dbReference type="NCBI Taxonomy" id="8613"/>
    <lineage>
        <taxon>Eukaryota</taxon>
        <taxon>Metazoa</taxon>
        <taxon>Chordata</taxon>
        <taxon>Craniata</taxon>
        <taxon>Vertebrata</taxon>
        <taxon>Euteleostomi</taxon>
        <taxon>Lepidosauria</taxon>
        <taxon>Squamata</taxon>
        <taxon>Bifurcata</taxon>
        <taxon>Unidentata</taxon>
        <taxon>Episquamata</taxon>
        <taxon>Toxicofera</taxon>
        <taxon>Serpentes</taxon>
        <taxon>Colubroidea</taxon>
        <taxon>Elapidae</taxon>
        <taxon>Bungarinae</taxon>
        <taxon>Bungarus</taxon>
    </lineage>
</organism>
<evidence type="ECO:0000250" key="1">
    <source>
        <dbReference type="UniProtKB" id="P0C1Z0"/>
    </source>
</evidence>
<evidence type="ECO:0000250" key="2">
    <source>
        <dbReference type="UniProtKB" id="P60775"/>
    </source>
</evidence>
<evidence type="ECO:0000269" key="3">
    <source>
    </source>
</evidence>
<evidence type="ECO:0000305" key="4"/>
<dbReference type="PIR" id="JX0060">
    <property type="entry name" value="JX0060"/>
</dbReference>
<dbReference type="SMR" id="P10808"/>
<dbReference type="GO" id="GO:0005576">
    <property type="term" value="C:extracellular region"/>
    <property type="evidence" value="ECO:0007669"/>
    <property type="project" value="UniProtKB-SubCell"/>
</dbReference>
<dbReference type="GO" id="GO:0030550">
    <property type="term" value="F:acetylcholine receptor inhibitor activity"/>
    <property type="evidence" value="ECO:0007669"/>
    <property type="project" value="UniProtKB-KW"/>
</dbReference>
<dbReference type="GO" id="GO:0099106">
    <property type="term" value="F:ion channel regulator activity"/>
    <property type="evidence" value="ECO:0007669"/>
    <property type="project" value="UniProtKB-KW"/>
</dbReference>
<dbReference type="GO" id="GO:0090729">
    <property type="term" value="F:toxin activity"/>
    <property type="evidence" value="ECO:0007669"/>
    <property type="project" value="UniProtKB-KW"/>
</dbReference>
<dbReference type="CDD" id="cd00206">
    <property type="entry name" value="TFP_snake_toxin"/>
    <property type="match status" value="1"/>
</dbReference>
<dbReference type="Gene3D" id="2.10.60.10">
    <property type="entry name" value="CD59"/>
    <property type="match status" value="1"/>
</dbReference>
<dbReference type="InterPro" id="IPR003571">
    <property type="entry name" value="Snake_3FTx"/>
</dbReference>
<dbReference type="InterPro" id="IPR045860">
    <property type="entry name" value="Snake_toxin-like_sf"/>
</dbReference>
<dbReference type="InterPro" id="IPR018354">
    <property type="entry name" value="Snake_toxin_con_site"/>
</dbReference>
<dbReference type="InterPro" id="IPR054131">
    <property type="entry name" value="Toxin_cobra-type"/>
</dbReference>
<dbReference type="Pfam" id="PF21947">
    <property type="entry name" value="Toxin_cobra-type"/>
    <property type="match status" value="1"/>
</dbReference>
<dbReference type="SUPFAM" id="SSF57302">
    <property type="entry name" value="Snake toxin-like"/>
    <property type="match status" value="1"/>
</dbReference>
<dbReference type="PROSITE" id="PS00272">
    <property type="entry name" value="SNAKE_TOXIN"/>
    <property type="match status" value="1"/>
</dbReference>
<accession>P10808</accession>
<proteinExistence type="evidence at protein level"/>
<name>3S11_BUNFA</name>